<proteinExistence type="inferred from homology"/>
<organism>
    <name type="scientific">Escherichia coli O17:K52:H18 (strain UMN026 / ExPEC)</name>
    <dbReference type="NCBI Taxonomy" id="585056"/>
    <lineage>
        <taxon>Bacteria</taxon>
        <taxon>Pseudomonadati</taxon>
        <taxon>Pseudomonadota</taxon>
        <taxon>Gammaproteobacteria</taxon>
        <taxon>Enterobacterales</taxon>
        <taxon>Enterobacteriaceae</taxon>
        <taxon>Escherichia</taxon>
    </lineage>
</organism>
<accession>B7NDS6</accession>
<dbReference type="EMBL" id="CU928163">
    <property type="protein sequence ID" value="CAR14926.1"/>
    <property type="molecule type" value="Genomic_DNA"/>
</dbReference>
<dbReference type="RefSeq" id="WP_000091945.1">
    <property type="nucleotide sequence ID" value="NC_011751.1"/>
</dbReference>
<dbReference type="RefSeq" id="YP_002414431.1">
    <property type="nucleotide sequence ID" value="NC_011751.1"/>
</dbReference>
<dbReference type="SMR" id="B7NDS6"/>
<dbReference type="STRING" id="585056.ECUMN_3778"/>
<dbReference type="GeneID" id="86948169"/>
<dbReference type="KEGG" id="eum:ECUMN_3778"/>
<dbReference type="PATRIC" id="fig|585056.7.peg.3953"/>
<dbReference type="HOGENOM" id="CLU_065464_1_2_6"/>
<dbReference type="Proteomes" id="UP000007097">
    <property type="component" value="Chromosome"/>
</dbReference>
<dbReference type="GO" id="GO:0022625">
    <property type="term" value="C:cytosolic large ribosomal subunit"/>
    <property type="evidence" value="ECO:0007669"/>
    <property type="project" value="TreeGrafter"/>
</dbReference>
<dbReference type="GO" id="GO:0019843">
    <property type="term" value="F:rRNA binding"/>
    <property type="evidence" value="ECO:0007669"/>
    <property type="project" value="UniProtKB-UniRule"/>
</dbReference>
<dbReference type="GO" id="GO:0003735">
    <property type="term" value="F:structural constituent of ribosome"/>
    <property type="evidence" value="ECO:0007669"/>
    <property type="project" value="InterPro"/>
</dbReference>
<dbReference type="GO" id="GO:0002181">
    <property type="term" value="P:cytoplasmic translation"/>
    <property type="evidence" value="ECO:0007669"/>
    <property type="project" value="TreeGrafter"/>
</dbReference>
<dbReference type="FunFam" id="3.90.930.12:FF:000001">
    <property type="entry name" value="50S ribosomal protein L6"/>
    <property type="match status" value="1"/>
</dbReference>
<dbReference type="FunFam" id="3.90.930.12:FF:000002">
    <property type="entry name" value="50S ribosomal protein L6"/>
    <property type="match status" value="1"/>
</dbReference>
<dbReference type="Gene3D" id="3.90.930.12">
    <property type="entry name" value="Ribosomal protein L6, alpha-beta domain"/>
    <property type="match status" value="2"/>
</dbReference>
<dbReference type="HAMAP" id="MF_01365_B">
    <property type="entry name" value="Ribosomal_uL6_B"/>
    <property type="match status" value="1"/>
</dbReference>
<dbReference type="InterPro" id="IPR000702">
    <property type="entry name" value="Ribosomal_uL6-like"/>
</dbReference>
<dbReference type="InterPro" id="IPR036789">
    <property type="entry name" value="Ribosomal_uL6-like_a/b-dom_sf"/>
</dbReference>
<dbReference type="InterPro" id="IPR020040">
    <property type="entry name" value="Ribosomal_uL6_a/b-dom"/>
</dbReference>
<dbReference type="InterPro" id="IPR019906">
    <property type="entry name" value="Ribosomal_uL6_bac-type"/>
</dbReference>
<dbReference type="InterPro" id="IPR002358">
    <property type="entry name" value="Ribosomal_uL6_CS"/>
</dbReference>
<dbReference type="NCBIfam" id="TIGR03654">
    <property type="entry name" value="L6_bact"/>
    <property type="match status" value="1"/>
</dbReference>
<dbReference type="PANTHER" id="PTHR11655">
    <property type="entry name" value="60S/50S RIBOSOMAL PROTEIN L6/L9"/>
    <property type="match status" value="1"/>
</dbReference>
<dbReference type="PANTHER" id="PTHR11655:SF14">
    <property type="entry name" value="LARGE RIBOSOMAL SUBUNIT PROTEIN UL6M"/>
    <property type="match status" value="1"/>
</dbReference>
<dbReference type="Pfam" id="PF00347">
    <property type="entry name" value="Ribosomal_L6"/>
    <property type="match status" value="2"/>
</dbReference>
<dbReference type="PIRSF" id="PIRSF002162">
    <property type="entry name" value="Ribosomal_L6"/>
    <property type="match status" value="1"/>
</dbReference>
<dbReference type="PRINTS" id="PR00059">
    <property type="entry name" value="RIBOSOMALL6"/>
</dbReference>
<dbReference type="SUPFAM" id="SSF56053">
    <property type="entry name" value="Ribosomal protein L6"/>
    <property type="match status" value="2"/>
</dbReference>
<dbReference type="PROSITE" id="PS00525">
    <property type="entry name" value="RIBOSOMAL_L6_1"/>
    <property type="match status" value="1"/>
</dbReference>
<comment type="function">
    <text evidence="1">This protein binds to the 23S rRNA, and is important in its secondary structure. It is located near the subunit interface in the base of the L7/L12 stalk, and near the tRNA binding site of the peptidyltransferase center.</text>
</comment>
<comment type="subunit">
    <text evidence="1">Part of the 50S ribosomal subunit.</text>
</comment>
<comment type="similarity">
    <text evidence="1">Belongs to the universal ribosomal protein uL6 family.</text>
</comment>
<sequence>MSRVAKAPVVVPAGVDVKINGQVITIKGKNGELTRTLNDAVEVKHADNTLTFGPRDGYADGWAQAGTARALLNSMVIGVTEGFTKKLQLVGVGYRAAVKGNVINLSLGFSHPVDHQLPAGITAECPTQTEIVLKGADKQVIGQVAADLRAYRRPEPYKGKGVRYADEVVRTKEAKKK</sequence>
<reference key="1">
    <citation type="journal article" date="2009" name="PLoS Genet.">
        <title>Organised genome dynamics in the Escherichia coli species results in highly diverse adaptive paths.</title>
        <authorList>
            <person name="Touchon M."/>
            <person name="Hoede C."/>
            <person name="Tenaillon O."/>
            <person name="Barbe V."/>
            <person name="Baeriswyl S."/>
            <person name="Bidet P."/>
            <person name="Bingen E."/>
            <person name="Bonacorsi S."/>
            <person name="Bouchier C."/>
            <person name="Bouvet O."/>
            <person name="Calteau A."/>
            <person name="Chiapello H."/>
            <person name="Clermont O."/>
            <person name="Cruveiller S."/>
            <person name="Danchin A."/>
            <person name="Diard M."/>
            <person name="Dossat C."/>
            <person name="Karoui M.E."/>
            <person name="Frapy E."/>
            <person name="Garry L."/>
            <person name="Ghigo J.M."/>
            <person name="Gilles A.M."/>
            <person name="Johnson J."/>
            <person name="Le Bouguenec C."/>
            <person name="Lescat M."/>
            <person name="Mangenot S."/>
            <person name="Martinez-Jehanne V."/>
            <person name="Matic I."/>
            <person name="Nassif X."/>
            <person name="Oztas S."/>
            <person name="Petit M.A."/>
            <person name="Pichon C."/>
            <person name="Rouy Z."/>
            <person name="Ruf C.S."/>
            <person name="Schneider D."/>
            <person name="Tourret J."/>
            <person name="Vacherie B."/>
            <person name="Vallenet D."/>
            <person name="Medigue C."/>
            <person name="Rocha E.P.C."/>
            <person name="Denamur E."/>
        </authorList>
    </citation>
    <scope>NUCLEOTIDE SEQUENCE [LARGE SCALE GENOMIC DNA]</scope>
    <source>
        <strain>UMN026 / ExPEC</strain>
    </source>
</reference>
<gene>
    <name evidence="1" type="primary">rplF</name>
    <name type="ordered locus">ECUMN_3778</name>
</gene>
<name>RL6_ECOLU</name>
<feature type="chain" id="PRO_1000143986" description="Large ribosomal subunit protein uL6">
    <location>
        <begin position="1"/>
        <end position="177"/>
    </location>
</feature>
<feature type="modified residue" description="N6-acetyllysine" evidence="1">
    <location>
        <position position="44"/>
    </location>
</feature>
<evidence type="ECO:0000255" key="1">
    <source>
        <dbReference type="HAMAP-Rule" id="MF_01365"/>
    </source>
</evidence>
<evidence type="ECO:0000305" key="2"/>
<protein>
    <recommendedName>
        <fullName evidence="1">Large ribosomal subunit protein uL6</fullName>
    </recommendedName>
    <alternativeName>
        <fullName evidence="2">50S ribosomal protein L6</fullName>
    </alternativeName>
</protein>
<keyword id="KW-0007">Acetylation</keyword>
<keyword id="KW-0687">Ribonucleoprotein</keyword>
<keyword id="KW-0689">Ribosomal protein</keyword>
<keyword id="KW-0694">RNA-binding</keyword>
<keyword id="KW-0699">rRNA-binding</keyword>